<gene>
    <name type="primary">Cmtm8</name>
    <name type="synonym">Cklfsf8</name>
</gene>
<dbReference type="EMBL" id="AY243513">
    <property type="protein sequence ID" value="AAO89236.1"/>
    <property type="molecule type" value="mRNA"/>
</dbReference>
<dbReference type="EMBL" id="AK012262">
    <property type="protein sequence ID" value="BAB28125.1"/>
    <property type="molecule type" value="mRNA"/>
</dbReference>
<dbReference type="EMBL" id="BC027554">
    <property type="protein sequence ID" value="AAH27554.1"/>
    <property type="molecule type" value="mRNA"/>
</dbReference>
<dbReference type="CCDS" id="CCDS23597.1"/>
<dbReference type="RefSeq" id="NP_081570.1">
    <property type="nucleotide sequence ID" value="NM_027294.2"/>
</dbReference>
<dbReference type="SMR" id="Q9CZR4"/>
<dbReference type="FunCoup" id="Q9CZR4">
    <property type="interactions" value="845"/>
</dbReference>
<dbReference type="STRING" id="10090.ENSMUSP00000043706"/>
<dbReference type="iPTMnet" id="Q9CZR4"/>
<dbReference type="PhosphoSitePlus" id="Q9CZR4"/>
<dbReference type="PaxDb" id="10090-ENSMUSP00000043706"/>
<dbReference type="ProteomicsDB" id="283627"/>
<dbReference type="Antibodypedia" id="27732">
    <property type="antibodies" value="139 antibodies from 25 providers"/>
</dbReference>
<dbReference type="DNASU" id="70031"/>
<dbReference type="Ensembl" id="ENSMUST00000047013.4">
    <property type="protein sequence ID" value="ENSMUSP00000043706.4"/>
    <property type="gene ID" value="ENSMUSG00000041012.5"/>
</dbReference>
<dbReference type="GeneID" id="70031"/>
<dbReference type="KEGG" id="mmu:70031"/>
<dbReference type="UCSC" id="uc009ryg.1">
    <property type="organism name" value="mouse"/>
</dbReference>
<dbReference type="AGR" id="MGI:2447167"/>
<dbReference type="CTD" id="152189"/>
<dbReference type="MGI" id="MGI:2447167">
    <property type="gene designation" value="Cmtm8"/>
</dbReference>
<dbReference type="VEuPathDB" id="HostDB:ENSMUSG00000041012"/>
<dbReference type="eggNOG" id="KOG4788">
    <property type="taxonomic scope" value="Eukaryota"/>
</dbReference>
<dbReference type="GeneTree" id="ENSGT00940000160520"/>
<dbReference type="HOGENOM" id="CLU_103581_1_0_1"/>
<dbReference type="InParanoid" id="Q9CZR4"/>
<dbReference type="OMA" id="VRGRHNY"/>
<dbReference type="OrthoDB" id="6481667at2759"/>
<dbReference type="PhylomeDB" id="Q9CZR4"/>
<dbReference type="TreeFam" id="TF316174"/>
<dbReference type="BioGRID-ORCS" id="70031">
    <property type="hits" value="2 hits in 77 CRISPR screens"/>
</dbReference>
<dbReference type="ChiTaRS" id="Cmtm8">
    <property type="organism name" value="mouse"/>
</dbReference>
<dbReference type="PRO" id="PR:Q9CZR4"/>
<dbReference type="Proteomes" id="UP000000589">
    <property type="component" value="Chromosome 9"/>
</dbReference>
<dbReference type="RNAct" id="Q9CZR4">
    <property type="molecule type" value="protein"/>
</dbReference>
<dbReference type="Bgee" id="ENSMUSG00000041012">
    <property type="expression patterns" value="Expressed in left lobe of liver and 174 other cell types or tissues"/>
</dbReference>
<dbReference type="GO" id="GO:0005615">
    <property type="term" value="C:extracellular space"/>
    <property type="evidence" value="ECO:0007669"/>
    <property type="project" value="UniProtKB-KW"/>
</dbReference>
<dbReference type="GO" id="GO:0016020">
    <property type="term" value="C:membrane"/>
    <property type="evidence" value="ECO:0007669"/>
    <property type="project" value="UniProtKB-SubCell"/>
</dbReference>
<dbReference type="GO" id="GO:0005654">
    <property type="term" value="C:nucleoplasm"/>
    <property type="evidence" value="ECO:0007669"/>
    <property type="project" value="Ensembl"/>
</dbReference>
<dbReference type="GO" id="GO:0005125">
    <property type="term" value="F:cytokine activity"/>
    <property type="evidence" value="ECO:0007669"/>
    <property type="project" value="UniProtKB-KW"/>
</dbReference>
<dbReference type="GO" id="GO:0006935">
    <property type="term" value="P:chemotaxis"/>
    <property type="evidence" value="ECO:0007669"/>
    <property type="project" value="UniProtKB-KW"/>
</dbReference>
<dbReference type="InterPro" id="IPR013295">
    <property type="entry name" value="MAL"/>
</dbReference>
<dbReference type="InterPro" id="IPR008253">
    <property type="entry name" value="Marvel"/>
</dbReference>
<dbReference type="InterPro" id="IPR050578">
    <property type="entry name" value="MARVEL-CKLF_proteins"/>
</dbReference>
<dbReference type="PANTHER" id="PTHR22776:SF10">
    <property type="entry name" value="CKLF-LIKE MARVEL TRANSMEMBRANE DOMAIN-CONTAINING PROTEIN 8"/>
    <property type="match status" value="1"/>
</dbReference>
<dbReference type="PANTHER" id="PTHR22776">
    <property type="entry name" value="MARVEL-CONTAINING POTENTIAL LIPID RAFT-ASSOCIATED PROTEIN"/>
    <property type="match status" value="1"/>
</dbReference>
<dbReference type="Pfam" id="PF01284">
    <property type="entry name" value="MARVEL"/>
    <property type="match status" value="1"/>
</dbReference>
<dbReference type="PRINTS" id="PR01884">
    <property type="entry name" value="MALPROTEIN"/>
</dbReference>
<dbReference type="PROSITE" id="PS51225">
    <property type="entry name" value="MARVEL"/>
    <property type="match status" value="1"/>
</dbReference>
<sequence>MEEQQRARSHTVTTTTSSFAENFSTTSSSFAYDREFLRTPPGLLIVAEIVLGLLVWTLIAGTEYFRVPAFGWVMFVAVFYWVLTVFFLIVYITLTYTRIPQVPWTTVGLCFNGSAFVLYFSAAIVDASSVSPEKEGHNFNSWAASSFFAFLVTICYAGNTYFSFIAWRSRTAQ</sequence>
<feature type="chain" id="PRO_0000186113" description="CKLF-like MARVEL transmembrane domain-containing protein 8">
    <location>
        <begin position="1"/>
        <end position="173"/>
    </location>
</feature>
<feature type="transmembrane region" description="Helical" evidence="1">
    <location>
        <begin position="41"/>
        <end position="61"/>
    </location>
</feature>
<feature type="transmembrane region" description="Helical" evidence="1">
    <location>
        <begin position="70"/>
        <end position="90"/>
    </location>
</feature>
<feature type="transmembrane region" description="Helical" evidence="1">
    <location>
        <begin position="105"/>
        <end position="125"/>
    </location>
</feature>
<feature type="transmembrane region" description="Helical" evidence="1">
    <location>
        <begin position="147"/>
        <end position="167"/>
    </location>
</feature>
<feature type="domain" description="MARVEL" evidence="2">
    <location>
        <begin position="36"/>
        <end position="168"/>
    </location>
</feature>
<comment type="subcellular location">
    <subcellularLocation>
        <location>Membrane</location>
        <topology>Multi-pass membrane protein</topology>
    </subcellularLocation>
</comment>
<comment type="similarity">
    <text evidence="3">Belongs to the chemokine-like factor family.</text>
</comment>
<name>CKLF8_MOUSE</name>
<accession>Q9CZR4</accession>
<evidence type="ECO:0000255" key="1"/>
<evidence type="ECO:0000255" key="2">
    <source>
        <dbReference type="PROSITE-ProRule" id="PRU00581"/>
    </source>
</evidence>
<evidence type="ECO:0000305" key="3"/>
<proteinExistence type="evidence at transcript level"/>
<protein>
    <recommendedName>
        <fullName>CKLF-like MARVEL transmembrane domain-containing protein 8</fullName>
    </recommendedName>
    <alternativeName>
        <fullName>Chemokine-like factor superfamily member 8</fullName>
    </alternativeName>
</protein>
<keyword id="KW-0145">Chemotaxis</keyword>
<keyword id="KW-0202">Cytokine</keyword>
<keyword id="KW-0472">Membrane</keyword>
<keyword id="KW-1185">Reference proteome</keyword>
<keyword id="KW-0812">Transmembrane</keyword>
<keyword id="KW-1133">Transmembrane helix</keyword>
<organism>
    <name type="scientific">Mus musculus</name>
    <name type="common">Mouse</name>
    <dbReference type="NCBI Taxonomy" id="10090"/>
    <lineage>
        <taxon>Eukaryota</taxon>
        <taxon>Metazoa</taxon>
        <taxon>Chordata</taxon>
        <taxon>Craniata</taxon>
        <taxon>Vertebrata</taxon>
        <taxon>Euteleostomi</taxon>
        <taxon>Mammalia</taxon>
        <taxon>Eutheria</taxon>
        <taxon>Euarchontoglires</taxon>
        <taxon>Glires</taxon>
        <taxon>Rodentia</taxon>
        <taxon>Myomorpha</taxon>
        <taxon>Muroidea</taxon>
        <taxon>Muridae</taxon>
        <taxon>Murinae</taxon>
        <taxon>Mus</taxon>
        <taxon>Mus</taxon>
    </lineage>
</organism>
<reference key="1">
    <citation type="submission" date="2003-02" db="EMBL/GenBank/DDBJ databases">
        <authorList>
            <person name="Ding P."/>
            <person name="Han W."/>
            <person name="Li T."/>
            <person name="Yang T."/>
            <person name="Shi S."/>
            <person name="Tan Y."/>
            <person name="Ma D."/>
        </authorList>
    </citation>
    <scope>NUCLEOTIDE SEQUENCE [MRNA]</scope>
    <source>
        <tissue>Leukocyte</tissue>
    </source>
</reference>
<reference key="2">
    <citation type="journal article" date="2005" name="Science">
        <title>The transcriptional landscape of the mammalian genome.</title>
        <authorList>
            <person name="Carninci P."/>
            <person name="Kasukawa T."/>
            <person name="Katayama S."/>
            <person name="Gough J."/>
            <person name="Frith M.C."/>
            <person name="Maeda N."/>
            <person name="Oyama R."/>
            <person name="Ravasi T."/>
            <person name="Lenhard B."/>
            <person name="Wells C."/>
            <person name="Kodzius R."/>
            <person name="Shimokawa K."/>
            <person name="Bajic V.B."/>
            <person name="Brenner S.E."/>
            <person name="Batalov S."/>
            <person name="Forrest A.R."/>
            <person name="Zavolan M."/>
            <person name="Davis M.J."/>
            <person name="Wilming L.G."/>
            <person name="Aidinis V."/>
            <person name="Allen J.E."/>
            <person name="Ambesi-Impiombato A."/>
            <person name="Apweiler R."/>
            <person name="Aturaliya R.N."/>
            <person name="Bailey T.L."/>
            <person name="Bansal M."/>
            <person name="Baxter L."/>
            <person name="Beisel K.W."/>
            <person name="Bersano T."/>
            <person name="Bono H."/>
            <person name="Chalk A.M."/>
            <person name="Chiu K.P."/>
            <person name="Choudhary V."/>
            <person name="Christoffels A."/>
            <person name="Clutterbuck D.R."/>
            <person name="Crowe M.L."/>
            <person name="Dalla E."/>
            <person name="Dalrymple B.P."/>
            <person name="de Bono B."/>
            <person name="Della Gatta G."/>
            <person name="di Bernardo D."/>
            <person name="Down T."/>
            <person name="Engstrom P."/>
            <person name="Fagiolini M."/>
            <person name="Faulkner G."/>
            <person name="Fletcher C.F."/>
            <person name="Fukushima T."/>
            <person name="Furuno M."/>
            <person name="Futaki S."/>
            <person name="Gariboldi M."/>
            <person name="Georgii-Hemming P."/>
            <person name="Gingeras T.R."/>
            <person name="Gojobori T."/>
            <person name="Green R.E."/>
            <person name="Gustincich S."/>
            <person name="Harbers M."/>
            <person name="Hayashi Y."/>
            <person name="Hensch T.K."/>
            <person name="Hirokawa N."/>
            <person name="Hill D."/>
            <person name="Huminiecki L."/>
            <person name="Iacono M."/>
            <person name="Ikeo K."/>
            <person name="Iwama A."/>
            <person name="Ishikawa T."/>
            <person name="Jakt M."/>
            <person name="Kanapin A."/>
            <person name="Katoh M."/>
            <person name="Kawasawa Y."/>
            <person name="Kelso J."/>
            <person name="Kitamura H."/>
            <person name="Kitano H."/>
            <person name="Kollias G."/>
            <person name="Krishnan S.P."/>
            <person name="Kruger A."/>
            <person name="Kummerfeld S.K."/>
            <person name="Kurochkin I.V."/>
            <person name="Lareau L.F."/>
            <person name="Lazarevic D."/>
            <person name="Lipovich L."/>
            <person name="Liu J."/>
            <person name="Liuni S."/>
            <person name="McWilliam S."/>
            <person name="Madan Babu M."/>
            <person name="Madera M."/>
            <person name="Marchionni L."/>
            <person name="Matsuda H."/>
            <person name="Matsuzawa S."/>
            <person name="Miki H."/>
            <person name="Mignone F."/>
            <person name="Miyake S."/>
            <person name="Morris K."/>
            <person name="Mottagui-Tabar S."/>
            <person name="Mulder N."/>
            <person name="Nakano N."/>
            <person name="Nakauchi H."/>
            <person name="Ng P."/>
            <person name="Nilsson R."/>
            <person name="Nishiguchi S."/>
            <person name="Nishikawa S."/>
            <person name="Nori F."/>
            <person name="Ohara O."/>
            <person name="Okazaki Y."/>
            <person name="Orlando V."/>
            <person name="Pang K.C."/>
            <person name="Pavan W.J."/>
            <person name="Pavesi G."/>
            <person name="Pesole G."/>
            <person name="Petrovsky N."/>
            <person name="Piazza S."/>
            <person name="Reed J."/>
            <person name="Reid J.F."/>
            <person name="Ring B.Z."/>
            <person name="Ringwald M."/>
            <person name="Rost B."/>
            <person name="Ruan Y."/>
            <person name="Salzberg S.L."/>
            <person name="Sandelin A."/>
            <person name="Schneider C."/>
            <person name="Schoenbach C."/>
            <person name="Sekiguchi K."/>
            <person name="Semple C.A."/>
            <person name="Seno S."/>
            <person name="Sessa L."/>
            <person name="Sheng Y."/>
            <person name="Shibata Y."/>
            <person name="Shimada H."/>
            <person name="Shimada K."/>
            <person name="Silva D."/>
            <person name="Sinclair B."/>
            <person name="Sperling S."/>
            <person name="Stupka E."/>
            <person name="Sugiura K."/>
            <person name="Sultana R."/>
            <person name="Takenaka Y."/>
            <person name="Taki K."/>
            <person name="Tammoja K."/>
            <person name="Tan S.L."/>
            <person name="Tang S."/>
            <person name="Taylor M.S."/>
            <person name="Tegner J."/>
            <person name="Teichmann S.A."/>
            <person name="Ueda H.R."/>
            <person name="van Nimwegen E."/>
            <person name="Verardo R."/>
            <person name="Wei C.L."/>
            <person name="Yagi K."/>
            <person name="Yamanishi H."/>
            <person name="Zabarovsky E."/>
            <person name="Zhu S."/>
            <person name="Zimmer A."/>
            <person name="Hide W."/>
            <person name="Bult C."/>
            <person name="Grimmond S.M."/>
            <person name="Teasdale R.D."/>
            <person name="Liu E.T."/>
            <person name="Brusic V."/>
            <person name="Quackenbush J."/>
            <person name="Wahlestedt C."/>
            <person name="Mattick J.S."/>
            <person name="Hume D.A."/>
            <person name="Kai C."/>
            <person name="Sasaki D."/>
            <person name="Tomaru Y."/>
            <person name="Fukuda S."/>
            <person name="Kanamori-Katayama M."/>
            <person name="Suzuki M."/>
            <person name="Aoki J."/>
            <person name="Arakawa T."/>
            <person name="Iida J."/>
            <person name="Imamura K."/>
            <person name="Itoh M."/>
            <person name="Kato T."/>
            <person name="Kawaji H."/>
            <person name="Kawagashira N."/>
            <person name="Kawashima T."/>
            <person name="Kojima M."/>
            <person name="Kondo S."/>
            <person name="Konno H."/>
            <person name="Nakano K."/>
            <person name="Ninomiya N."/>
            <person name="Nishio T."/>
            <person name="Okada M."/>
            <person name="Plessy C."/>
            <person name="Shibata K."/>
            <person name="Shiraki T."/>
            <person name="Suzuki S."/>
            <person name="Tagami M."/>
            <person name="Waki K."/>
            <person name="Watahiki A."/>
            <person name="Okamura-Oho Y."/>
            <person name="Suzuki H."/>
            <person name="Kawai J."/>
            <person name="Hayashizaki Y."/>
        </authorList>
    </citation>
    <scope>NUCLEOTIDE SEQUENCE [LARGE SCALE MRNA]</scope>
    <source>
        <strain>C57BL/6J</strain>
        <tissue>Embryo</tissue>
    </source>
</reference>
<reference key="3">
    <citation type="journal article" date="2004" name="Genome Res.">
        <title>The status, quality, and expansion of the NIH full-length cDNA project: the Mammalian Gene Collection (MGC).</title>
        <authorList>
            <consortium name="The MGC Project Team"/>
        </authorList>
    </citation>
    <scope>NUCLEOTIDE SEQUENCE [LARGE SCALE MRNA]</scope>
    <source>
        <tissue>Mammary gland</tissue>
    </source>
</reference>